<organism>
    <name type="scientific">Saccharomyces cerevisiae (strain ATCC 204508 / S288c)</name>
    <name type="common">Baker's yeast</name>
    <dbReference type="NCBI Taxonomy" id="559292"/>
    <lineage>
        <taxon>Eukaryota</taxon>
        <taxon>Fungi</taxon>
        <taxon>Dikarya</taxon>
        <taxon>Ascomycota</taxon>
        <taxon>Saccharomycotina</taxon>
        <taxon>Saccharomycetes</taxon>
        <taxon>Saccharomycetales</taxon>
        <taxon>Saccharomycetaceae</taxon>
        <taxon>Saccharomyces</taxon>
    </lineage>
</organism>
<feature type="chain" id="PRO_0000212448" description="Probable tubulin--tyrosine ligase PBY1">
    <location>
        <begin position="1"/>
        <end position="753"/>
    </location>
</feature>
<feature type="domain" description="TTL" evidence="2">
    <location>
        <begin position="343"/>
        <end position="734"/>
    </location>
</feature>
<feature type="sequence conflict" description="In Ref. 4; CAA49508." evidence="6" ref="4">
    <original>HALK</original>
    <variation>TPE</variation>
    <location>
        <begin position="352"/>
        <end position="355"/>
    </location>
</feature>
<feature type="sequence conflict" description="In Ref. 1; CAA55599 and 2; CAA85047." evidence="6" ref="1 2">
    <original>A</original>
    <variation>R</variation>
    <location>
        <position position="450"/>
    </location>
</feature>
<feature type="sequence conflict" description="In Ref. 4; CAA49508." evidence="6" ref="4">
    <original>H</original>
    <variation>R</variation>
    <location>
        <position position="563"/>
    </location>
</feature>
<feature type="strand" evidence="7">
    <location>
        <begin position="336"/>
        <end position="338"/>
    </location>
</feature>
<feature type="strand" evidence="7">
    <location>
        <begin position="342"/>
        <end position="344"/>
    </location>
</feature>
<feature type="helix" evidence="7">
    <location>
        <begin position="345"/>
        <end position="347"/>
    </location>
</feature>
<feature type="helix" evidence="7">
    <location>
        <begin position="348"/>
        <end position="351"/>
    </location>
</feature>
<feature type="helix" evidence="7">
    <location>
        <begin position="353"/>
        <end position="356"/>
    </location>
</feature>
<feature type="strand" evidence="7">
    <location>
        <begin position="363"/>
        <end position="365"/>
    </location>
</feature>
<feature type="turn" evidence="7">
    <location>
        <begin position="368"/>
        <end position="370"/>
    </location>
</feature>
<feature type="strand" evidence="7">
    <location>
        <begin position="381"/>
        <end position="384"/>
    </location>
</feature>
<feature type="helix" evidence="7">
    <location>
        <begin position="387"/>
        <end position="389"/>
    </location>
</feature>
<feature type="helix" evidence="7">
    <location>
        <begin position="393"/>
        <end position="397"/>
    </location>
</feature>
<feature type="turn" evidence="7">
    <location>
        <begin position="399"/>
        <end position="401"/>
    </location>
</feature>
<feature type="strand" evidence="7">
    <location>
        <begin position="402"/>
        <end position="405"/>
    </location>
</feature>
<feature type="strand" evidence="7">
    <location>
        <begin position="408"/>
        <end position="410"/>
    </location>
</feature>
<feature type="helix" evidence="7">
    <location>
        <begin position="411"/>
        <end position="414"/>
    </location>
</feature>
<feature type="helix" evidence="7">
    <location>
        <begin position="416"/>
        <end position="427"/>
    </location>
</feature>
<feature type="helix" evidence="7">
    <location>
        <begin position="435"/>
        <end position="438"/>
    </location>
</feature>
<feature type="strand" evidence="7">
    <location>
        <begin position="442"/>
        <end position="446"/>
    </location>
</feature>
<feature type="strand" evidence="7">
    <location>
        <begin position="449"/>
        <end position="451"/>
    </location>
</feature>
<feature type="helix" evidence="7">
    <location>
        <begin position="454"/>
        <end position="457"/>
    </location>
</feature>
<feature type="helix" evidence="7">
    <location>
        <begin position="458"/>
        <end position="460"/>
    </location>
</feature>
<feature type="helix" evidence="7">
    <location>
        <begin position="461"/>
        <end position="468"/>
    </location>
</feature>
<feature type="strand" evidence="7">
    <location>
        <begin position="476"/>
        <end position="479"/>
    </location>
</feature>
<feature type="strand" evidence="7">
    <location>
        <begin position="490"/>
        <end position="494"/>
    </location>
</feature>
<feature type="helix" evidence="7">
    <location>
        <begin position="495"/>
        <end position="507"/>
    </location>
</feature>
<feature type="strand" evidence="7">
    <location>
        <begin position="541"/>
        <end position="546"/>
    </location>
</feature>
<feature type="helix" evidence="7">
    <location>
        <begin position="555"/>
        <end position="557"/>
    </location>
</feature>
<feature type="strand" evidence="7">
    <location>
        <begin position="562"/>
        <end position="571"/>
    </location>
</feature>
<feature type="turn" evidence="7">
    <location>
        <begin position="572"/>
        <end position="574"/>
    </location>
</feature>
<feature type="strand" evidence="7">
    <location>
        <begin position="575"/>
        <end position="580"/>
    </location>
</feature>
<feature type="strand" evidence="7">
    <location>
        <begin position="583"/>
        <end position="586"/>
    </location>
</feature>
<feature type="strand" evidence="7">
    <location>
        <begin position="588"/>
        <end position="590"/>
    </location>
</feature>
<feature type="strand" evidence="7">
    <location>
        <begin position="626"/>
        <end position="629"/>
    </location>
</feature>
<feature type="helix" evidence="7">
    <location>
        <begin position="630"/>
        <end position="632"/>
    </location>
</feature>
<feature type="strand" evidence="7">
    <location>
        <begin position="634"/>
        <end position="636"/>
    </location>
</feature>
<feature type="helix" evidence="7">
    <location>
        <begin position="638"/>
        <end position="660"/>
    </location>
</feature>
<feature type="turn" evidence="7">
    <location>
        <begin position="664"/>
        <end position="666"/>
    </location>
</feature>
<feature type="strand" evidence="7">
    <location>
        <begin position="673"/>
        <end position="684"/>
    </location>
</feature>
<feature type="strand" evidence="7">
    <location>
        <begin position="689"/>
        <end position="697"/>
    </location>
</feature>
<feature type="helix" evidence="7">
    <location>
        <begin position="700"/>
        <end position="702"/>
    </location>
</feature>
<feature type="helix" evidence="7">
    <location>
        <begin position="709"/>
        <end position="722"/>
    </location>
</feature>
<feature type="helix" evidence="7">
    <location>
        <begin position="724"/>
        <end position="726"/>
    </location>
</feature>
<feature type="helix" evidence="7">
    <location>
        <begin position="732"/>
        <end position="735"/>
    </location>
</feature>
<feature type="strand" evidence="7">
    <location>
        <begin position="742"/>
        <end position="746"/>
    </location>
</feature>
<dbReference type="EC" id="6.3.2.25"/>
<dbReference type="EMBL" id="X78993">
    <property type="protein sequence ID" value="CAA55599.1"/>
    <property type="molecule type" value="Genomic_DNA"/>
</dbReference>
<dbReference type="EMBL" id="Z35963">
    <property type="protein sequence ID" value="CAA85047.1"/>
    <property type="molecule type" value="Genomic_DNA"/>
</dbReference>
<dbReference type="EMBL" id="X69881">
    <property type="protein sequence ID" value="CAA49508.1"/>
    <property type="molecule type" value="Genomic_DNA"/>
</dbReference>
<dbReference type="EMBL" id="BK006936">
    <property type="protein sequence ID" value="DAA07215.2"/>
    <property type="molecule type" value="Genomic_DNA"/>
</dbReference>
<dbReference type="PIR" id="S48261">
    <property type="entry name" value="S48261"/>
</dbReference>
<dbReference type="RefSeq" id="NP_009652.2">
    <property type="nucleotide sequence ID" value="NM_001178442.2"/>
</dbReference>
<dbReference type="PDB" id="6Y3Z">
    <property type="method" value="X-ray"/>
    <property type="resolution" value="3.49 A"/>
    <property type="chains" value="P=330-753"/>
</dbReference>
<dbReference type="PDBsum" id="6Y3Z"/>
<dbReference type="SMR" id="P38254"/>
<dbReference type="BioGRID" id="32800">
    <property type="interactions" value="93"/>
</dbReference>
<dbReference type="DIP" id="DIP-1585N"/>
<dbReference type="FunCoup" id="P38254">
    <property type="interactions" value="51"/>
</dbReference>
<dbReference type="IntAct" id="P38254">
    <property type="interactions" value="12"/>
</dbReference>
<dbReference type="MINT" id="P38254"/>
<dbReference type="STRING" id="4932.YBR094W"/>
<dbReference type="iPTMnet" id="P38254"/>
<dbReference type="PaxDb" id="4932-YBR094W"/>
<dbReference type="PeptideAtlas" id="P38254"/>
<dbReference type="EnsemblFungi" id="YBR094W_mRNA">
    <property type="protein sequence ID" value="YBR094W"/>
    <property type="gene ID" value="YBR094W"/>
</dbReference>
<dbReference type="GeneID" id="852391"/>
<dbReference type="KEGG" id="sce:YBR094W"/>
<dbReference type="AGR" id="SGD:S000000298"/>
<dbReference type="SGD" id="S000000298">
    <property type="gene designation" value="PBY1"/>
</dbReference>
<dbReference type="VEuPathDB" id="FungiDB:YBR094W"/>
<dbReference type="eggNOG" id="KOG2157">
    <property type="taxonomic scope" value="Eukaryota"/>
</dbReference>
<dbReference type="GeneTree" id="ENSGT00940000164409"/>
<dbReference type="HOGENOM" id="CLU_007204_0_0_1"/>
<dbReference type="InParanoid" id="P38254"/>
<dbReference type="OMA" id="TNTCFQE"/>
<dbReference type="OrthoDB" id="202825at2759"/>
<dbReference type="BioCyc" id="YEAST:G3O-29058-MONOMER"/>
<dbReference type="BioGRID-ORCS" id="852391">
    <property type="hits" value="1 hit in 10 CRISPR screens"/>
</dbReference>
<dbReference type="CD-CODE" id="A777E0F8">
    <property type="entry name" value="P-body"/>
</dbReference>
<dbReference type="PRO" id="PR:P38254"/>
<dbReference type="Proteomes" id="UP000002311">
    <property type="component" value="Chromosome II"/>
</dbReference>
<dbReference type="RNAct" id="P38254">
    <property type="molecule type" value="protein"/>
</dbReference>
<dbReference type="GO" id="GO:0005737">
    <property type="term" value="C:cytoplasm"/>
    <property type="evidence" value="ECO:0007005"/>
    <property type="project" value="SGD"/>
</dbReference>
<dbReference type="GO" id="GO:0000932">
    <property type="term" value="C:P-body"/>
    <property type="evidence" value="ECO:0000314"/>
    <property type="project" value="SGD"/>
</dbReference>
<dbReference type="GO" id="GO:0005524">
    <property type="term" value="F:ATP binding"/>
    <property type="evidence" value="ECO:0007669"/>
    <property type="project" value="InterPro"/>
</dbReference>
<dbReference type="GO" id="GO:0016787">
    <property type="term" value="F:hydrolase activity"/>
    <property type="evidence" value="ECO:0007669"/>
    <property type="project" value="InterPro"/>
</dbReference>
<dbReference type="GO" id="GO:0004835">
    <property type="term" value="F:tubulin-tyrosine ligase activity"/>
    <property type="evidence" value="ECO:0007669"/>
    <property type="project" value="UniProtKB-EC"/>
</dbReference>
<dbReference type="GO" id="GO:0036211">
    <property type="term" value="P:protein modification process"/>
    <property type="evidence" value="ECO:0007669"/>
    <property type="project" value="InterPro"/>
</dbReference>
<dbReference type="FunFam" id="3.30.470.20:FF:000068">
    <property type="entry name" value="Tubulin-tyrosine ligase"/>
    <property type="match status" value="1"/>
</dbReference>
<dbReference type="FunFam" id="3.40.1210.10:FF:000002">
    <property type="entry name" value="Tubulin-tyrosine ligase"/>
    <property type="match status" value="1"/>
</dbReference>
<dbReference type="Gene3D" id="3.30.1490.20">
    <property type="entry name" value="ATP-grasp fold, A domain"/>
    <property type="match status" value="1"/>
</dbReference>
<dbReference type="Gene3D" id="3.30.470.20">
    <property type="entry name" value="ATP-grasp fold, B domain"/>
    <property type="match status" value="1"/>
</dbReference>
<dbReference type="Gene3D" id="3.40.1210.10">
    <property type="entry name" value="Survival protein SurE-like phosphatase/nucleotidase"/>
    <property type="match status" value="1"/>
</dbReference>
<dbReference type="InterPro" id="IPR013815">
    <property type="entry name" value="ATP_grasp_subdomain_1"/>
</dbReference>
<dbReference type="InterPro" id="IPR002828">
    <property type="entry name" value="SurE-like_Pase/nucleotidase"/>
</dbReference>
<dbReference type="InterPro" id="IPR036523">
    <property type="entry name" value="SurE-like_sf"/>
</dbReference>
<dbReference type="InterPro" id="IPR027746">
    <property type="entry name" value="TTL"/>
</dbReference>
<dbReference type="InterPro" id="IPR004344">
    <property type="entry name" value="TTL/TTLL_fam"/>
</dbReference>
<dbReference type="NCBIfam" id="TIGR00087">
    <property type="entry name" value="surE"/>
    <property type="match status" value="1"/>
</dbReference>
<dbReference type="PANTHER" id="PTHR47551">
    <property type="entry name" value="TUBULIN--TYROSINE LIGASE PBY1-RELATED"/>
    <property type="match status" value="1"/>
</dbReference>
<dbReference type="PANTHER" id="PTHR47551:SF1">
    <property type="entry name" value="TUBULIN--TYROSINE LIGASE PBY1-RELATED"/>
    <property type="match status" value="1"/>
</dbReference>
<dbReference type="Pfam" id="PF01975">
    <property type="entry name" value="SurE"/>
    <property type="match status" value="1"/>
</dbReference>
<dbReference type="Pfam" id="PF03133">
    <property type="entry name" value="TTL"/>
    <property type="match status" value="1"/>
</dbReference>
<dbReference type="SUPFAM" id="SSF56059">
    <property type="entry name" value="Glutathione synthetase ATP-binding domain-like"/>
    <property type="match status" value="1"/>
</dbReference>
<dbReference type="SUPFAM" id="SSF64167">
    <property type="entry name" value="SurE-like"/>
    <property type="match status" value="1"/>
</dbReference>
<dbReference type="PROSITE" id="PS51221">
    <property type="entry name" value="TTL"/>
    <property type="match status" value="1"/>
</dbReference>
<gene>
    <name type="primary">PBY1</name>
    <name type="ordered locus">YBR094W</name>
    <name type="ORF">YBR0821</name>
</gene>
<name>TTL_YEAST</name>
<proteinExistence type="evidence at protein level"/>
<comment type="function">
    <text evidence="1 5">Probable P-body-associated tubulin--tyrosine ligase.</text>
</comment>
<comment type="catalytic activity">
    <reaction>
        <text>C-terminal L-alpha-aminoacyl-L-glutamyl-L-glutamyl-[tubulin] + L-tyrosine + ATP = C-terminal L-alpha-aminoacyl-L-glutamyl-L-glutamyl-L-tyrosyl-[tubulin] + ADP + phosphate + H(+)</text>
        <dbReference type="Rhea" id="RHEA:17605"/>
        <dbReference type="Rhea" id="RHEA-COMP:16434"/>
        <dbReference type="Rhea" id="RHEA-COMP:16435"/>
        <dbReference type="ChEBI" id="CHEBI:15378"/>
        <dbReference type="ChEBI" id="CHEBI:30616"/>
        <dbReference type="ChEBI" id="CHEBI:43474"/>
        <dbReference type="ChEBI" id="CHEBI:58315"/>
        <dbReference type="ChEBI" id="CHEBI:149554"/>
        <dbReference type="ChEBI" id="CHEBI:149555"/>
        <dbReference type="ChEBI" id="CHEBI:456216"/>
        <dbReference type="EC" id="6.3.2.25"/>
    </reaction>
</comment>
<comment type="cofactor">
    <cofactor evidence="1">
        <name>Mg(2+)</name>
        <dbReference type="ChEBI" id="CHEBI:18420"/>
    </cofactor>
</comment>
<comment type="cofactor">
    <cofactor evidence="1">
        <name>K(+)</name>
        <dbReference type="ChEBI" id="CHEBI:29103"/>
    </cofactor>
</comment>
<comment type="subcellular location">
    <subcellularLocation>
        <location evidence="3">Cytoplasm</location>
    </subcellularLocation>
    <subcellularLocation>
        <location evidence="5">Cytoplasm</location>
        <location evidence="5">P-body</location>
    </subcellularLocation>
</comment>
<comment type="miscellaneous">
    <text evidence="4">Present with 1770 molecules/cell in log phase SD medium.</text>
</comment>
<comment type="similarity">
    <text evidence="6">Belongs to the tubulin--tyrosine ligase family.</text>
</comment>
<keyword id="KW-0002">3D-structure</keyword>
<keyword id="KW-0963">Cytoplasm</keyword>
<keyword id="KW-0436">Ligase</keyword>
<keyword id="KW-0460">Magnesium</keyword>
<keyword id="KW-0630">Potassium</keyword>
<keyword id="KW-1185">Reference proteome</keyword>
<reference key="1">
    <citation type="journal article" date="1994" name="Yeast">
        <title>Analysis of a 70 kb region on the right arm of yeast chromosome II.</title>
        <authorList>
            <person name="Mannhaupt G."/>
            <person name="Stucka R."/>
            <person name="Ehnle S."/>
            <person name="Vetter I."/>
            <person name="Feldmann H."/>
        </authorList>
    </citation>
    <scope>NUCLEOTIDE SEQUENCE [GENOMIC DNA]</scope>
    <source>
        <strain>ATCC 204508 / S288c</strain>
    </source>
</reference>
<reference key="2">
    <citation type="journal article" date="1994" name="EMBO J.">
        <title>Complete DNA sequence of yeast chromosome II.</title>
        <authorList>
            <person name="Feldmann H."/>
            <person name="Aigle M."/>
            <person name="Aljinovic G."/>
            <person name="Andre B."/>
            <person name="Baclet M.C."/>
            <person name="Barthe C."/>
            <person name="Baur A."/>
            <person name="Becam A.-M."/>
            <person name="Biteau N."/>
            <person name="Boles E."/>
            <person name="Brandt T."/>
            <person name="Brendel M."/>
            <person name="Brueckner M."/>
            <person name="Bussereau F."/>
            <person name="Christiansen C."/>
            <person name="Contreras R."/>
            <person name="Crouzet M."/>
            <person name="Cziepluch C."/>
            <person name="Demolis N."/>
            <person name="Delaveau T."/>
            <person name="Doignon F."/>
            <person name="Domdey H."/>
            <person name="Duesterhus S."/>
            <person name="Dubois E."/>
            <person name="Dujon B."/>
            <person name="El Bakkoury M."/>
            <person name="Entian K.-D."/>
            <person name="Feuermann M."/>
            <person name="Fiers W."/>
            <person name="Fobo G.M."/>
            <person name="Fritz C."/>
            <person name="Gassenhuber J."/>
            <person name="Glansdorff N."/>
            <person name="Goffeau A."/>
            <person name="Grivell L.A."/>
            <person name="de Haan M."/>
            <person name="Hein C."/>
            <person name="Herbert C.J."/>
            <person name="Hollenberg C.P."/>
            <person name="Holmstroem K."/>
            <person name="Jacq C."/>
            <person name="Jacquet M."/>
            <person name="Jauniaux J.-C."/>
            <person name="Jonniaux J.-L."/>
            <person name="Kallesoee T."/>
            <person name="Kiesau P."/>
            <person name="Kirchrath L."/>
            <person name="Koetter P."/>
            <person name="Korol S."/>
            <person name="Liebl S."/>
            <person name="Logghe M."/>
            <person name="Lohan A.J.E."/>
            <person name="Louis E.J."/>
            <person name="Li Z.Y."/>
            <person name="Maat M.J."/>
            <person name="Mallet L."/>
            <person name="Mannhaupt G."/>
            <person name="Messenguy F."/>
            <person name="Miosga T."/>
            <person name="Molemans F."/>
            <person name="Mueller S."/>
            <person name="Nasr F."/>
            <person name="Obermaier B."/>
            <person name="Perea J."/>
            <person name="Pierard A."/>
            <person name="Piravandi E."/>
            <person name="Pohl F.M."/>
            <person name="Pohl T.M."/>
            <person name="Potier S."/>
            <person name="Proft M."/>
            <person name="Purnelle B."/>
            <person name="Ramezani Rad M."/>
            <person name="Rieger M."/>
            <person name="Rose M."/>
            <person name="Schaaff-Gerstenschlaeger I."/>
            <person name="Scherens B."/>
            <person name="Schwarzlose C."/>
            <person name="Skala J."/>
            <person name="Slonimski P.P."/>
            <person name="Smits P.H.M."/>
            <person name="Souciet J.-L."/>
            <person name="Steensma H.Y."/>
            <person name="Stucka R."/>
            <person name="Urrestarazu L.A."/>
            <person name="van der Aart Q.J.M."/>
            <person name="Van Dyck L."/>
            <person name="Vassarotti A."/>
            <person name="Vetter I."/>
            <person name="Vierendeels F."/>
            <person name="Vissers S."/>
            <person name="Wagner G."/>
            <person name="de Wergifosse P."/>
            <person name="Wolfe K.H."/>
            <person name="Zagulski M."/>
            <person name="Zimmermann F.K."/>
            <person name="Mewes H.-W."/>
            <person name="Kleine K."/>
        </authorList>
    </citation>
    <scope>NUCLEOTIDE SEQUENCE [LARGE SCALE GENOMIC DNA]</scope>
    <source>
        <strain>ATCC 204508 / S288c</strain>
    </source>
</reference>
<reference key="3">
    <citation type="journal article" date="2014" name="G3 (Bethesda)">
        <title>The reference genome sequence of Saccharomyces cerevisiae: Then and now.</title>
        <authorList>
            <person name="Engel S.R."/>
            <person name="Dietrich F.S."/>
            <person name="Fisk D.G."/>
            <person name="Binkley G."/>
            <person name="Balakrishnan R."/>
            <person name="Costanzo M.C."/>
            <person name="Dwight S.S."/>
            <person name="Hitz B.C."/>
            <person name="Karra K."/>
            <person name="Nash R.S."/>
            <person name="Weng S."/>
            <person name="Wong E.D."/>
            <person name="Lloyd P."/>
            <person name="Skrzypek M.S."/>
            <person name="Miyasato S.R."/>
            <person name="Simison M."/>
            <person name="Cherry J.M."/>
        </authorList>
    </citation>
    <scope>GENOME REANNOTATION</scope>
    <scope>SEQUENCE REVISION TO 450</scope>
    <source>
        <strain>ATCC 204508 / S288c</strain>
    </source>
</reference>
<reference key="4">
    <citation type="submission" date="1992-12" db="EMBL/GenBank/DDBJ databases">
        <authorList>
            <person name="Dekker P.J.T."/>
            <person name="Hoekert W."/>
            <person name="van Oosterum K."/>
            <person name="Grivell L.A."/>
        </authorList>
    </citation>
    <scope>NUCLEOTIDE SEQUENCE [GENOMIC DNA] OF 167-753</scope>
    <source>
        <strain>ATCC 26109 / X2180</strain>
    </source>
</reference>
<reference key="5">
    <citation type="journal article" date="2003" name="Nature">
        <title>Global analysis of protein localization in budding yeast.</title>
        <authorList>
            <person name="Huh W.-K."/>
            <person name="Falvo J.V."/>
            <person name="Gerke L.C."/>
            <person name="Carroll A.S."/>
            <person name="Howson R.W."/>
            <person name="Weissman J.S."/>
            <person name="O'Shea E.K."/>
        </authorList>
    </citation>
    <scope>SUBCELLULAR LOCATION [LARGE SCALE ANALYSIS]</scope>
</reference>
<reference key="6">
    <citation type="journal article" date="2003" name="Nature">
        <title>Global analysis of protein expression in yeast.</title>
        <authorList>
            <person name="Ghaemmaghami S."/>
            <person name="Huh W.-K."/>
            <person name="Bower K."/>
            <person name="Howson R.W."/>
            <person name="Belle A."/>
            <person name="Dephoure N."/>
            <person name="O'Shea E.K."/>
            <person name="Weissman J.S."/>
        </authorList>
    </citation>
    <scope>LEVEL OF PROTEIN EXPRESSION [LARGE SCALE ANALYSIS]</scope>
</reference>
<reference key="7">
    <citation type="journal article" date="2007" name="RNA">
        <title>Microtubule disruption stimulates P-body formation.</title>
        <authorList>
            <person name="Sweet T.J."/>
            <person name="Boyer B."/>
            <person name="Hu W."/>
            <person name="Baker K.E."/>
            <person name="Coller J."/>
        </authorList>
    </citation>
    <scope>SUBCELLULAR LOCATION</scope>
    <scope>FUNCTION</scope>
</reference>
<accession>P38254</accession>
<accession>D6VQ95</accession>
<sequence>MRVLITNDDGPLSDQFSPYIRPFIQHIKRNYPEWKITVCVPHVQKSWVGKAHLAGKNLTAQFIYSKVDAEDNTFWGPFIQPQIRSENSKLPYVLNAEIPKDTIEWILIDGTPASCANIGLHLLSNEPFDLVLSGPNVGRNTSAAYITSSGTVGGAMESVITGNTKAIAISWAYFNGLKNVSPLLMEKASKRSLDVIKHLVKNWDPKTDLYSINIPLVESLSDDTKVYYAPIWENRWIPIFNGPHINLENSFAEIEDGNESSSISFNWAPKFGAHKDSIHYMDEYKDRTVLTDAEVIESEMISVTPMKATFKGVNHLLGELKLTEEENNLSKTNNLIVVSIDPMEYIYKPLTHALKKYLPQVEIVSNLPEFDNGGCEKEMKVFHYGDYEQLDMDKLMELPNNYFTNSYIYRKALIRKHFLSHTIQTYTAKNPESILKKAYLESFTIDLDYAEFLDDALDENWELRQELENESQDKWWIVKPSMSDKGQGIRVFKTIEDLQAIFDSFDDEDSEAEESGNDDDADDVNGEFMDNNKVNISQLRHFIIQEYLTNPLLLASMDNRKFHIRCYVVCRGDLQVFVYDRMLALFAAKPFVPLDPYAYSVTDLKDLECHLTNTCLQSKKKDKDSSVLEFDSIEEIPNERKSNIKEQIHSITNDVFLAAVNVNRLNFQPLPNAFETYGVDFLIDSNYEVKLLEINAFPDFKQTGKDLKNLIDELFDDTVKYCVTPIFNENRNKTDDETDPNFVKVIDYTSNGW</sequence>
<protein>
    <recommendedName>
        <fullName>Probable tubulin--tyrosine ligase PBY1</fullName>
        <ecNumber>6.3.2.25</ecNumber>
    </recommendedName>
    <alternativeName>
        <fullName>P-body-associated protein 1</fullName>
    </alternativeName>
</protein>
<evidence type="ECO:0000250" key="1"/>
<evidence type="ECO:0000255" key="2">
    <source>
        <dbReference type="PROSITE-ProRule" id="PRU00568"/>
    </source>
</evidence>
<evidence type="ECO:0000269" key="3">
    <source>
    </source>
</evidence>
<evidence type="ECO:0000269" key="4">
    <source>
    </source>
</evidence>
<evidence type="ECO:0000269" key="5">
    <source>
    </source>
</evidence>
<evidence type="ECO:0000305" key="6"/>
<evidence type="ECO:0007829" key="7">
    <source>
        <dbReference type="PDB" id="6Y3Z"/>
    </source>
</evidence>